<reference key="1">
    <citation type="journal article" date="2004" name="Nat. Biotechnol.">
        <title>The genome sequence of the capnophilic rumen bacterium Mannheimia succiniciproducens.</title>
        <authorList>
            <person name="Hong S.H."/>
            <person name="Kim J.S."/>
            <person name="Lee S.Y."/>
            <person name="In Y.H."/>
            <person name="Choi S.S."/>
            <person name="Rih J.-K."/>
            <person name="Kim C.H."/>
            <person name="Jeong H."/>
            <person name="Hur C.G."/>
            <person name="Kim J.J."/>
        </authorList>
    </citation>
    <scope>NUCLEOTIDE SEQUENCE [LARGE SCALE GENOMIC DNA]</scope>
    <source>
        <strain>KCTC 0769BP / MBEL55E</strain>
    </source>
</reference>
<name>RRAA_MANSM</name>
<dbReference type="EMBL" id="AE016827">
    <property type="protein sequence ID" value="AAU38446.1"/>
    <property type="status" value="ALT_INIT"/>
    <property type="molecule type" value="Genomic_DNA"/>
</dbReference>
<dbReference type="RefSeq" id="WP_041639983.1">
    <property type="nucleotide sequence ID" value="NC_006300.1"/>
</dbReference>
<dbReference type="SMR" id="Q65RG4"/>
<dbReference type="STRING" id="221988.MS1839"/>
<dbReference type="KEGG" id="msu:MS1839"/>
<dbReference type="eggNOG" id="COG0684">
    <property type="taxonomic scope" value="Bacteria"/>
</dbReference>
<dbReference type="HOGENOM" id="CLU_072626_4_0_6"/>
<dbReference type="OrthoDB" id="943692at2"/>
<dbReference type="Proteomes" id="UP000000607">
    <property type="component" value="Chromosome"/>
</dbReference>
<dbReference type="GO" id="GO:0005737">
    <property type="term" value="C:cytoplasm"/>
    <property type="evidence" value="ECO:0007669"/>
    <property type="project" value="UniProtKB-SubCell"/>
</dbReference>
<dbReference type="GO" id="GO:0060698">
    <property type="term" value="F:endoribonuclease inhibitor activity"/>
    <property type="evidence" value="ECO:0007669"/>
    <property type="project" value="UniProtKB-UniRule"/>
</dbReference>
<dbReference type="GO" id="GO:0019899">
    <property type="term" value="F:enzyme binding"/>
    <property type="evidence" value="ECO:0007669"/>
    <property type="project" value="UniProtKB-UniRule"/>
</dbReference>
<dbReference type="GO" id="GO:0051252">
    <property type="term" value="P:regulation of RNA metabolic process"/>
    <property type="evidence" value="ECO:0007669"/>
    <property type="project" value="InterPro"/>
</dbReference>
<dbReference type="CDD" id="cd16841">
    <property type="entry name" value="RraA_family"/>
    <property type="match status" value="1"/>
</dbReference>
<dbReference type="Gene3D" id="3.50.30.40">
    <property type="entry name" value="Ribonuclease E inhibitor RraA/RraA-like"/>
    <property type="match status" value="1"/>
</dbReference>
<dbReference type="HAMAP" id="MF_00471">
    <property type="entry name" value="RraA"/>
    <property type="match status" value="1"/>
</dbReference>
<dbReference type="InterPro" id="IPR010203">
    <property type="entry name" value="RraA"/>
</dbReference>
<dbReference type="InterPro" id="IPR005493">
    <property type="entry name" value="RraA/RraA-like"/>
</dbReference>
<dbReference type="InterPro" id="IPR036704">
    <property type="entry name" value="RraA/RraA-like_sf"/>
</dbReference>
<dbReference type="InterPro" id="IPR014339">
    <property type="entry name" value="RraA_gpbac"/>
</dbReference>
<dbReference type="NCBIfam" id="TIGR01935">
    <property type="entry name" value="NOT-MenG"/>
    <property type="match status" value="1"/>
</dbReference>
<dbReference type="NCBIfam" id="NF006875">
    <property type="entry name" value="PRK09372.1"/>
    <property type="match status" value="1"/>
</dbReference>
<dbReference type="NCBIfam" id="TIGR02998">
    <property type="entry name" value="RraA_entero"/>
    <property type="match status" value="1"/>
</dbReference>
<dbReference type="PANTHER" id="PTHR33254">
    <property type="entry name" value="4-HYDROXY-4-METHYL-2-OXOGLUTARATE ALDOLASE 3-RELATED"/>
    <property type="match status" value="1"/>
</dbReference>
<dbReference type="PANTHER" id="PTHR33254:SF29">
    <property type="entry name" value="REGULATOR OF RIBONUCLEASE ACTIVITY A"/>
    <property type="match status" value="1"/>
</dbReference>
<dbReference type="Pfam" id="PF03737">
    <property type="entry name" value="RraA-like"/>
    <property type="match status" value="1"/>
</dbReference>
<dbReference type="SUPFAM" id="SSF89562">
    <property type="entry name" value="RraA-like"/>
    <property type="match status" value="1"/>
</dbReference>
<accession>Q65RG4</accession>
<proteinExistence type="inferred from homology"/>
<evidence type="ECO:0000255" key="1">
    <source>
        <dbReference type="HAMAP-Rule" id="MF_00471"/>
    </source>
</evidence>
<evidence type="ECO:0000305" key="2"/>
<sequence length="166" mass="17990">MRIDTSELCDVYLDQVDVVEPIFSSFGGVNEFFGKVTTIKCFENNGLIAEILEEQGEGRVLLVDGGGAVRRALIDAELAQLAADNGWEGIIVYGAVRQLSRLENINIGIHALAPIPVGADEDTQGESDIPVNFGGVTFFPEDYVYADLTGIILSQEPLELEELGEE</sequence>
<comment type="function">
    <text evidence="1">Globally modulates RNA abundance by binding to RNase E (Rne) and regulating its endonucleolytic activity. Can modulate Rne action in a substrate-dependent manner by altering the composition of the degradosome. Modulates RNA-binding and helicase activities of the degradosome.</text>
</comment>
<comment type="subunit">
    <text evidence="1">Homotrimer. Binds to both RNA-binding sites in the C-terminal region of Rne and to RhlB.</text>
</comment>
<comment type="subcellular location">
    <subcellularLocation>
        <location evidence="1">Cytoplasm</location>
    </subcellularLocation>
</comment>
<comment type="similarity">
    <text evidence="1">Belongs to the RraA family.</text>
</comment>
<comment type="sequence caution" evidence="2">
    <conflict type="erroneous initiation">
        <sequence resource="EMBL-CDS" id="AAU38446"/>
    </conflict>
</comment>
<keyword id="KW-0963">Cytoplasm</keyword>
<organism>
    <name type="scientific">Mannheimia succiniciproducens (strain KCTC 0769BP / MBEL55E)</name>
    <dbReference type="NCBI Taxonomy" id="221988"/>
    <lineage>
        <taxon>Bacteria</taxon>
        <taxon>Pseudomonadati</taxon>
        <taxon>Pseudomonadota</taxon>
        <taxon>Gammaproteobacteria</taxon>
        <taxon>Pasteurellales</taxon>
        <taxon>Pasteurellaceae</taxon>
        <taxon>Basfia</taxon>
    </lineage>
</organism>
<protein>
    <recommendedName>
        <fullName evidence="1">Regulator of ribonuclease activity A</fullName>
    </recommendedName>
</protein>
<feature type="chain" id="PRO_0000209618" description="Regulator of ribonuclease activity A">
    <location>
        <begin position="1"/>
        <end position="166"/>
    </location>
</feature>
<gene>
    <name evidence="1" type="primary">rraA</name>
    <name type="ordered locus">MS1839</name>
</gene>